<evidence type="ECO:0000255" key="1">
    <source>
        <dbReference type="HAMAP-Rule" id="MF_01342"/>
    </source>
</evidence>
<evidence type="ECO:0000305" key="2"/>
<keyword id="KW-0687">Ribonucleoprotein</keyword>
<keyword id="KW-0689">Ribosomal protein</keyword>
<keyword id="KW-0694">RNA-binding</keyword>
<keyword id="KW-0699">rRNA-binding</keyword>
<keyword id="KW-0820">tRNA-binding</keyword>
<accession>Q83I71</accession>
<comment type="function">
    <text evidence="1">Binds 23S rRNA and is also seen to make contacts with the A and possibly P site tRNAs.</text>
</comment>
<comment type="subunit">
    <text evidence="1">Part of the 50S ribosomal subunit.</text>
</comment>
<comment type="similarity">
    <text evidence="1">Belongs to the universal ribosomal protein uL16 family.</text>
</comment>
<feature type="chain" id="PRO_0000062241" description="Large ribosomal subunit protein uL16">
    <location>
        <begin position="1"/>
        <end position="143"/>
    </location>
</feature>
<reference key="1">
    <citation type="journal article" date="2003" name="Lancet">
        <title>Sequencing and analysis of the genome of the Whipple's disease bacterium Tropheryma whipplei.</title>
        <authorList>
            <person name="Bentley S.D."/>
            <person name="Maiwald M."/>
            <person name="Murphy L.D."/>
            <person name="Pallen M.J."/>
            <person name="Yeats C.A."/>
            <person name="Dover L.G."/>
            <person name="Norbertczak H.T."/>
            <person name="Besra G.S."/>
            <person name="Quail M.A."/>
            <person name="Harris D.E."/>
            <person name="von Herbay A."/>
            <person name="Goble A."/>
            <person name="Rutter S."/>
            <person name="Squares R."/>
            <person name="Squares S."/>
            <person name="Barrell B.G."/>
            <person name="Parkhill J."/>
            <person name="Relman D.A."/>
        </authorList>
    </citation>
    <scope>NUCLEOTIDE SEQUENCE [LARGE SCALE GENOMIC DNA]</scope>
    <source>
        <strain>TW08/27</strain>
    </source>
</reference>
<sequence>MMLIPKKVKFRKQHRPNRKGMSGCGTRIVFGDYGIQALSRAYVTNRQVESARIAMTRHIRRGGRVWINIYPDRPLTKKPAETRMGSGKGSPEYWVANIRPGRIMFEVSGVSESLAKEALMRAIHKLPLRARIVERQEFDDAGL</sequence>
<proteinExistence type="inferred from homology"/>
<gene>
    <name evidence="1" type="primary">rplP</name>
    <name type="ordered locus">TW214</name>
</gene>
<name>RL16_TROW8</name>
<protein>
    <recommendedName>
        <fullName evidence="1">Large ribosomal subunit protein uL16</fullName>
    </recommendedName>
    <alternativeName>
        <fullName evidence="2">50S ribosomal protein L16</fullName>
    </alternativeName>
</protein>
<dbReference type="EMBL" id="BX251410">
    <property type="protein sequence ID" value="CAD66891.1"/>
    <property type="molecule type" value="Genomic_DNA"/>
</dbReference>
<dbReference type="SMR" id="Q83I71"/>
<dbReference type="KEGG" id="tws:TW214"/>
<dbReference type="HOGENOM" id="CLU_078858_2_1_11"/>
<dbReference type="GO" id="GO:0022625">
    <property type="term" value="C:cytosolic large ribosomal subunit"/>
    <property type="evidence" value="ECO:0007669"/>
    <property type="project" value="TreeGrafter"/>
</dbReference>
<dbReference type="GO" id="GO:0019843">
    <property type="term" value="F:rRNA binding"/>
    <property type="evidence" value="ECO:0007669"/>
    <property type="project" value="UniProtKB-UniRule"/>
</dbReference>
<dbReference type="GO" id="GO:0003735">
    <property type="term" value="F:structural constituent of ribosome"/>
    <property type="evidence" value="ECO:0007669"/>
    <property type="project" value="InterPro"/>
</dbReference>
<dbReference type="GO" id="GO:0000049">
    <property type="term" value="F:tRNA binding"/>
    <property type="evidence" value="ECO:0007669"/>
    <property type="project" value="UniProtKB-KW"/>
</dbReference>
<dbReference type="GO" id="GO:0006412">
    <property type="term" value="P:translation"/>
    <property type="evidence" value="ECO:0007669"/>
    <property type="project" value="UniProtKB-UniRule"/>
</dbReference>
<dbReference type="CDD" id="cd01433">
    <property type="entry name" value="Ribosomal_L16_L10e"/>
    <property type="match status" value="1"/>
</dbReference>
<dbReference type="FunFam" id="3.90.1170.10:FF:000001">
    <property type="entry name" value="50S ribosomal protein L16"/>
    <property type="match status" value="1"/>
</dbReference>
<dbReference type="Gene3D" id="3.90.1170.10">
    <property type="entry name" value="Ribosomal protein L10e/L16"/>
    <property type="match status" value="1"/>
</dbReference>
<dbReference type="HAMAP" id="MF_01342">
    <property type="entry name" value="Ribosomal_uL16"/>
    <property type="match status" value="1"/>
</dbReference>
<dbReference type="InterPro" id="IPR047873">
    <property type="entry name" value="Ribosomal_uL16"/>
</dbReference>
<dbReference type="InterPro" id="IPR000114">
    <property type="entry name" value="Ribosomal_uL16_bact-type"/>
</dbReference>
<dbReference type="InterPro" id="IPR020798">
    <property type="entry name" value="Ribosomal_uL16_CS"/>
</dbReference>
<dbReference type="InterPro" id="IPR016180">
    <property type="entry name" value="Ribosomal_uL16_dom"/>
</dbReference>
<dbReference type="InterPro" id="IPR036920">
    <property type="entry name" value="Ribosomal_uL16_sf"/>
</dbReference>
<dbReference type="NCBIfam" id="TIGR01164">
    <property type="entry name" value="rplP_bact"/>
    <property type="match status" value="1"/>
</dbReference>
<dbReference type="PANTHER" id="PTHR12220">
    <property type="entry name" value="50S/60S RIBOSOMAL PROTEIN L16"/>
    <property type="match status" value="1"/>
</dbReference>
<dbReference type="PANTHER" id="PTHR12220:SF13">
    <property type="entry name" value="LARGE RIBOSOMAL SUBUNIT PROTEIN UL16M"/>
    <property type="match status" value="1"/>
</dbReference>
<dbReference type="Pfam" id="PF00252">
    <property type="entry name" value="Ribosomal_L16"/>
    <property type="match status" value="1"/>
</dbReference>
<dbReference type="PRINTS" id="PR00060">
    <property type="entry name" value="RIBOSOMALL16"/>
</dbReference>
<dbReference type="SUPFAM" id="SSF54686">
    <property type="entry name" value="Ribosomal protein L16p/L10e"/>
    <property type="match status" value="1"/>
</dbReference>
<dbReference type="PROSITE" id="PS00586">
    <property type="entry name" value="RIBOSOMAL_L16_1"/>
    <property type="match status" value="1"/>
</dbReference>
<dbReference type="PROSITE" id="PS00701">
    <property type="entry name" value="RIBOSOMAL_L16_2"/>
    <property type="match status" value="1"/>
</dbReference>
<organism>
    <name type="scientific">Tropheryma whipplei (strain TW08/27)</name>
    <name type="common">Whipple's bacillus</name>
    <dbReference type="NCBI Taxonomy" id="218496"/>
    <lineage>
        <taxon>Bacteria</taxon>
        <taxon>Bacillati</taxon>
        <taxon>Actinomycetota</taxon>
        <taxon>Actinomycetes</taxon>
        <taxon>Micrococcales</taxon>
        <taxon>Tropherymataceae</taxon>
        <taxon>Tropheryma</taxon>
    </lineage>
</organism>